<organism>
    <name type="scientific">Zymomonas mobilis subsp. mobilis (strain ATCC 31821 / ZM4 / CP4)</name>
    <dbReference type="NCBI Taxonomy" id="264203"/>
    <lineage>
        <taxon>Bacteria</taxon>
        <taxon>Pseudomonadati</taxon>
        <taxon>Pseudomonadota</taxon>
        <taxon>Alphaproteobacteria</taxon>
        <taxon>Sphingomonadales</taxon>
        <taxon>Zymomonadaceae</taxon>
        <taxon>Zymomonas</taxon>
    </lineage>
</organism>
<name>Y1337_ZYMMO</name>
<keyword id="KW-0223">Dioxygenase</keyword>
<keyword id="KW-0479">Metal-binding</keyword>
<keyword id="KW-0560">Oxidoreductase</keyword>
<keyword id="KW-1185">Reference proteome</keyword>
<protein>
    <recommendedName>
        <fullName>Putative quercetin 2,3-dioxygenase ZMO1337</fullName>
        <shortName>Putative quercetinase</shortName>
        <ecNumber>1.13.11.24</ecNumber>
    </recommendedName>
    <alternativeName>
        <fullName>Pirin-like protein ZMO1337</fullName>
    </alternativeName>
</protein>
<evidence type="ECO:0000250" key="1"/>
<evidence type="ECO:0000305" key="2"/>
<proteinExistence type="inferred from homology"/>
<sequence>MIVKRPYKNLGFADHGWLQARHHFSFARYFDPDRINWGAVRVWNDDRIAPDTGFGMHPHKDMEIVTYIREGALTHEDSLGNKGRIEAGDVQVMSAGTGIVHSEYNREASDTRLFQIWIMPNQSGHKPSWGSRSFPKKDHAGRFVVLASGYPEDKEALPIHADAAVLGATLNKGDVINYPLEEQRYGYLVVSKGIIAIENCTLQEGDAAGLAEVETISIEAKEDSEIVMVVTGAKI</sequence>
<dbReference type="EC" id="1.13.11.24"/>
<dbReference type="EMBL" id="AF157493">
    <property type="protein sequence ID" value="AAD42408.1"/>
    <property type="molecule type" value="Genomic_DNA"/>
</dbReference>
<dbReference type="EMBL" id="AE008692">
    <property type="protein sequence ID" value="AAV89961.1"/>
    <property type="molecule type" value="Genomic_DNA"/>
</dbReference>
<dbReference type="RefSeq" id="WP_011241135.1">
    <property type="nucleotide sequence ID" value="NC_006526.2"/>
</dbReference>
<dbReference type="SMR" id="Q9XBR7"/>
<dbReference type="KEGG" id="zmo:ZMO1337"/>
<dbReference type="eggNOG" id="COG1741">
    <property type="taxonomic scope" value="Bacteria"/>
</dbReference>
<dbReference type="HOGENOM" id="CLU_064194_2_2_5"/>
<dbReference type="UniPathway" id="UPA00724"/>
<dbReference type="Proteomes" id="UP000001173">
    <property type="component" value="Chromosome"/>
</dbReference>
<dbReference type="GO" id="GO:0046872">
    <property type="term" value="F:metal ion binding"/>
    <property type="evidence" value="ECO:0007669"/>
    <property type="project" value="UniProtKB-KW"/>
</dbReference>
<dbReference type="GO" id="GO:0008127">
    <property type="term" value="F:quercetin 2,3-dioxygenase activity"/>
    <property type="evidence" value="ECO:0007669"/>
    <property type="project" value="UniProtKB-EC"/>
</dbReference>
<dbReference type="CDD" id="cd02910">
    <property type="entry name" value="cupin_Yhhw_N"/>
    <property type="match status" value="1"/>
</dbReference>
<dbReference type="Gene3D" id="2.60.120.10">
    <property type="entry name" value="Jelly Rolls"/>
    <property type="match status" value="2"/>
</dbReference>
<dbReference type="InterPro" id="IPR012093">
    <property type="entry name" value="Pirin"/>
</dbReference>
<dbReference type="InterPro" id="IPR003829">
    <property type="entry name" value="Pirin_N_dom"/>
</dbReference>
<dbReference type="InterPro" id="IPR041602">
    <property type="entry name" value="Quercetinase_C"/>
</dbReference>
<dbReference type="InterPro" id="IPR014710">
    <property type="entry name" value="RmlC-like_jellyroll"/>
</dbReference>
<dbReference type="InterPro" id="IPR011051">
    <property type="entry name" value="RmlC_Cupin_sf"/>
</dbReference>
<dbReference type="PANTHER" id="PTHR43212">
    <property type="entry name" value="QUERCETIN 2,3-DIOXYGENASE"/>
    <property type="match status" value="1"/>
</dbReference>
<dbReference type="PANTHER" id="PTHR43212:SF3">
    <property type="entry name" value="QUERCETIN 2,3-DIOXYGENASE"/>
    <property type="match status" value="1"/>
</dbReference>
<dbReference type="Pfam" id="PF02678">
    <property type="entry name" value="Pirin"/>
    <property type="match status" value="1"/>
</dbReference>
<dbReference type="Pfam" id="PF17954">
    <property type="entry name" value="Pirin_C_2"/>
    <property type="match status" value="1"/>
</dbReference>
<dbReference type="PIRSF" id="PIRSF006232">
    <property type="entry name" value="Pirin"/>
    <property type="match status" value="1"/>
</dbReference>
<dbReference type="SUPFAM" id="SSF51182">
    <property type="entry name" value="RmlC-like cupins"/>
    <property type="match status" value="1"/>
</dbReference>
<gene>
    <name type="ordered locus">ZMO1337</name>
    <name type="ORF">zm10orf8</name>
</gene>
<reference key="1">
    <citation type="submission" date="1999-06" db="EMBL/GenBank/DDBJ databases">
        <authorList>
            <person name="Um H.W."/>
            <person name="Kang H.S."/>
        </authorList>
    </citation>
    <scope>NUCLEOTIDE SEQUENCE [GENOMIC DNA]</scope>
    <source>
        <strain>ATCC 31821 / ZM4 / CP4</strain>
    </source>
</reference>
<reference key="2">
    <citation type="journal article" date="2005" name="Nat. Biotechnol.">
        <title>The genome sequence of the ethanologenic bacterium Zymomonas mobilis ZM4.</title>
        <authorList>
            <person name="Seo J.-S."/>
            <person name="Chong H."/>
            <person name="Park H.S."/>
            <person name="Yoon K.-O."/>
            <person name="Jung C."/>
            <person name="Kim J.J."/>
            <person name="Hong J.H."/>
            <person name="Kim H."/>
            <person name="Kim J.-H."/>
            <person name="Kil J.-I."/>
            <person name="Park C.J."/>
            <person name="Oh H.-M."/>
            <person name="Lee J.-S."/>
            <person name="Jin S.-J."/>
            <person name="Um H.-W."/>
            <person name="Lee H.-J."/>
            <person name="Oh S.-J."/>
            <person name="Kim J.Y."/>
            <person name="Kang H.L."/>
            <person name="Lee S.Y."/>
            <person name="Lee K.J."/>
            <person name="Kang H.S."/>
        </authorList>
    </citation>
    <scope>NUCLEOTIDE SEQUENCE [LARGE SCALE GENOMIC DNA]</scope>
    <source>
        <strain>ATCC 31821 / ZM4 / CP4</strain>
    </source>
</reference>
<accession>Q9XBR7</accession>
<accession>Q5NMU9</accession>
<feature type="chain" id="PRO_0000214074" description="Putative quercetin 2,3-dioxygenase ZMO1337">
    <location>
        <begin position="1"/>
        <end position="235"/>
    </location>
</feature>
<feature type="binding site" evidence="1">
    <location>
        <position position="57"/>
    </location>
    <ligand>
        <name>a divalent metal cation</name>
        <dbReference type="ChEBI" id="CHEBI:60240"/>
    </ligand>
</feature>
<feature type="binding site" evidence="1">
    <location>
        <position position="59"/>
    </location>
    <ligand>
        <name>a divalent metal cation</name>
        <dbReference type="ChEBI" id="CHEBI:60240"/>
    </ligand>
</feature>
<feature type="binding site" evidence="1">
    <location>
        <position position="101"/>
    </location>
    <ligand>
        <name>a divalent metal cation</name>
        <dbReference type="ChEBI" id="CHEBI:60240"/>
    </ligand>
</feature>
<feature type="binding site" evidence="1">
    <location>
        <position position="103"/>
    </location>
    <ligand>
        <name>a divalent metal cation</name>
        <dbReference type="ChEBI" id="CHEBI:60240"/>
    </ligand>
</feature>
<comment type="function">
    <text evidence="1">Putative quercetin 2,3-dioxygenase.</text>
</comment>
<comment type="catalytic activity">
    <reaction>
        <text>quercetin + O2 = 2-(3,4-dihydroxybenzoyloxy)-4,6-dihydroxybenzoate + CO</text>
        <dbReference type="Rhea" id="RHEA:15381"/>
        <dbReference type="ChEBI" id="CHEBI:15379"/>
        <dbReference type="ChEBI" id="CHEBI:17245"/>
        <dbReference type="ChEBI" id="CHEBI:57628"/>
        <dbReference type="ChEBI" id="CHEBI:57694"/>
        <dbReference type="EC" id="1.13.11.24"/>
    </reaction>
</comment>
<comment type="cofactor">
    <cofactor evidence="1">
        <name>a divalent metal cation</name>
        <dbReference type="ChEBI" id="CHEBI:60240"/>
    </cofactor>
    <text evidence="1">Binds 1 divalent metal cation.</text>
</comment>
<comment type="pathway">
    <text>Flavonoid metabolism; quercetin degradation.</text>
</comment>
<comment type="similarity">
    <text evidence="2">Belongs to the pirin family.</text>
</comment>